<protein>
    <recommendedName>
        <fullName>Gene 29 protein</fullName>
    </recommendedName>
    <alternativeName>
        <fullName>Gp29</fullName>
    </alternativeName>
</protein>
<proteinExistence type="predicted"/>
<organism>
    <name type="scientific">Mycobacterium phage L5</name>
    <name type="common">Mycobacteriophage L5</name>
    <dbReference type="NCBI Taxonomy" id="31757"/>
    <lineage>
        <taxon>Viruses</taxon>
        <taxon>Duplodnaviria</taxon>
        <taxon>Heunggongvirae</taxon>
        <taxon>Uroviricota</taxon>
        <taxon>Caudoviricetes</taxon>
        <taxon>Fromanvirus</taxon>
    </lineage>
</organism>
<keyword id="KW-1185">Reference proteome</keyword>
<sequence>MIPSQESHNPNDPRQHVMWALRNLPMIAGVGAITHPGYLADWSEHLWKCGFRHVDWLRELADEDGNIHVSQLPDQEIKFQQPFRGQRSDYNNAARWVGKDDPDPEPVRIPDIRKLTDQENRAMIAQYERDGWIKDGSPGPAIAEVVE</sequence>
<feature type="chain" id="PRO_0000164747" description="Gene 29 protein">
    <location>
        <begin position="1"/>
        <end position="147"/>
    </location>
</feature>
<name>VG29_BPML5</name>
<accession>Q05236</accession>
<gene>
    <name type="primary">29</name>
</gene>
<dbReference type="EMBL" id="Z18946">
    <property type="protein sequence ID" value="CAA79405.1"/>
    <property type="molecule type" value="Genomic_DNA"/>
</dbReference>
<dbReference type="PIR" id="S30974">
    <property type="entry name" value="S30974"/>
</dbReference>
<dbReference type="RefSeq" id="NP_039693.1">
    <property type="nucleotide sequence ID" value="NC_001335.1"/>
</dbReference>
<dbReference type="SMR" id="Q05236"/>
<dbReference type="GeneID" id="2942938"/>
<dbReference type="KEGG" id="vg:2942938"/>
<dbReference type="OrthoDB" id="10891at10239"/>
<dbReference type="Proteomes" id="UP000002123">
    <property type="component" value="Genome"/>
</dbReference>
<dbReference type="InterPro" id="IPR021226">
    <property type="entry name" value="Phage_gene29"/>
</dbReference>
<dbReference type="Pfam" id="PF10910">
    <property type="entry name" value="Phage_gene29"/>
    <property type="match status" value="1"/>
</dbReference>
<reference key="1">
    <citation type="journal article" date="1993" name="Mol. Microbiol.">
        <title>DNA sequence, structure and gene expression of mycobacteriophage L5: a phage system for mycobacterial genetics.</title>
        <authorList>
            <person name="Hatfull G.F."/>
            <person name="Sarkis G.J."/>
        </authorList>
    </citation>
    <scope>NUCLEOTIDE SEQUENCE [LARGE SCALE GENOMIC DNA]</scope>
</reference>
<organismHost>
    <name type="scientific">Mycobacterium</name>
    <dbReference type="NCBI Taxonomy" id="1763"/>
</organismHost>